<reference key="1">
    <citation type="journal article" date="2003" name="Genome Res.">
        <title>Genome sequence of an M3 strain of Streptococcus pyogenes reveals a large-scale genomic rearrangement in invasive strains and new insights into phage evolution.</title>
        <authorList>
            <person name="Nakagawa I."/>
            <person name="Kurokawa K."/>
            <person name="Yamashita A."/>
            <person name="Nakata M."/>
            <person name="Tomiyasu Y."/>
            <person name="Okahashi N."/>
            <person name="Kawabata S."/>
            <person name="Yamazaki K."/>
            <person name="Shiba T."/>
            <person name="Yasunaga T."/>
            <person name="Hayashi H."/>
            <person name="Hattori M."/>
            <person name="Hamada S."/>
        </authorList>
    </citation>
    <scope>NUCLEOTIDE SEQUENCE [LARGE SCALE GENOMIC DNA]</scope>
    <source>
        <strain>SSI-1</strain>
    </source>
</reference>
<keyword id="KW-0030">Aminoacyl-tRNA synthetase</keyword>
<keyword id="KW-0067">ATP-binding</keyword>
<keyword id="KW-0963">Cytoplasm</keyword>
<keyword id="KW-0436">Ligase</keyword>
<keyword id="KW-0460">Magnesium</keyword>
<keyword id="KW-0479">Metal-binding</keyword>
<keyword id="KW-0547">Nucleotide-binding</keyword>
<keyword id="KW-0648">Protein biosynthesis</keyword>
<keyword id="KW-0694">RNA-binding</keyword>
<keyword id="KW-0820">tRNA-binding</keyword>
<protein>
    <recommendedName>
        <fullName evidence="1">Phenylalanine--tRNA ligase beta subunit</fullName>
        <ecNumber evidence="1">6.1.1.20</ecNumber>
    </recommendedName>
    <alternativeName>
        <fullName evidence="1">Phenylalanyl-tRNA synthetase beta subunit</fullName>
        <shortName evidence="1">PheRS</shortName>
    </alternativeName>
</protein>
<organism>
    <name type="scientific">Streptococcus pyogenes serotype M3 (strain SSI-1)</name>
    <dbReference type="NCBI Taxonomy" id="193567"/>
    <lineage>
        <taxon>Bacteria</taxon>
        <taxon>Bacillati</taxon>
        <taxon>Bacillota</taxon>
        <taxon>Bacilli</taxon>
        <taxon>Lactobacillales</taxon>
        <taxon>Streptococcaceae</taxon>
        <taxon>Streptococcus</taxon>
    </lineage>
</organism>
<dbReference type="EC" id="6.1.1.20" evidence="1"/>
<dbReference type="EMBL" id="BA000034">
    <property type="protein sequence ID" value="BAC64442.1"/>
    <property type="molecule type" value="Genomic_DNA"/>
</dbReference>
<dbReference type="RefSeq" id="WP_011106836.1">
    <property type="nucleotide sequence ID" value="NC_004606.1"/>
</dbReference>
<dbReference type="SMR" id="P0DG53"/>
<dbReference type="KEGG" id="sps:SPs1347"/>
<dbReference type="HOGENOM" id="CLU_016891_0_0_9"/>
<dbReference type="GO" id="GO:0009328">
    <property type="term" value="C:phenylalanine-tRNA ligase complex"/>
    <property type="evidence" value="ECO:0007669"/>
    <property type="project" value="TreeGrafter"/>
</dbReference>
<dbReference type="GO" id="GO:0005524">
    <property type="term" value="F:ATP binding"/>
    <property type="evidence" value="ECO:0007669"/>
    <property type="project" value="UniProtKB-UniRule"/>
</dbReference>
<dbReference type="GO" id="GO:0140096">
    <property type="term" value="F:catalytic activity, acting on a protein"/>
    <property type="evidence" value="ECO:0007669"/>
    <property type="project" value="UniProtKB-ARBA"/>
</dbReference>
<dbReference type="GO" id="GO:0000287">
    <property type="term" value="F:magnesium ion binding"/>
    <property type="evidence" value="ECO:0007669"/>
    <property type="project" value="UniProtKB-UniRule"/>
</dbReference>
<dbReference type="GO" id="GO:0004826">
    <property type="term" value="F:phenylalanine-tRNA ligase activity"/>
    <property type="evidence" value="ECO:0007669"/>
    <property type="project" value="UniProtKB-UniRule"/>
</dbReference>
<dbReference type="GO" id="GO:0016740">
    <property type="term" value="F:transferase activity"/>
    <property type="evidence" value="ECO:0007669"/>
    <property type="project" value="UniProtKB-ARBA"/>
</dbReference>
<dbReference type="GO" id="GO:0000049">
    <property type="term" value="F:tRNA binding"/>
    <property type="evidence" value="ECO:0007669"/>
    <property type="project" value="UniProtKB-KW"/>
</dbReference>
<dbReference type="GO" id="GO:0006432">
    <property type="term" value="P:phenylalanyl-tRNA aminoacylation"/>
    <property type="evidence" value="ECO:0007669"/>
    <property type="project" value="UniProtKB-UniRule"/>
</dbReference>
<dbReference type="CDD" id="cd00769">
    <property type="entry name" value="PheRS_beta_core"/>
    <property type="match status" value="1"/>
</dbReference>
<dbReference type="CDD" id="cd02796">
    <property type="entry name" value="tRNA_bind_bactPheRS"/>
    <property type="match status" value="1"/>
</dbReference>
<dbReference type="FunFam" id="2.40.50.140:FF:000045">
    <property type="entry name" value="Phenylalanine--tRNA ligase beta subunit"/>
    <property type="match status" value="1"/>
</dbReference>
<dbReference type="FunFam" id="3.30.56.10:FF:000002">
    <property type="entry name" value="Phenylalanine--tRNA ligase beta subunit"/>
    <property type="match status" value="1"/>
</dbReference>
<dbReference type="FunFam" id="3.30.70.380:FF:000001">
    <property type="entry name" value="Phenylalanine--tRNA ligase beta subunit"/>
    <property type="match status" value="1"/>
</dbReference>
<dbReference type="FunFam" id="3.30.930.10:FF:000022">
    <property type="entry name" value="Phenylalanine--tRNA ligase beta subunit"/>
    <property type="match status" value="1"/>
</dbReference>
<dbReference type="FunFam" id="3.50.40.10:FF:000001">
    <property type="entry name" value="Phenylalanine--tRNA ligase beta subunit"/>
    <property type="match status" value="1"/>
</dbReference>
<dbReference type="Gene3D" id="3.30.56.10">
    <property type="match status" value="2"/>
</dbReference>
<dbReference type="Gene3D" id="3.30.930.10">
    <property type="entry name" value="Bira Bifunctional Protein, Domain 2"/>
    <property type="match status" value="1"/>
</dbReference>
<dbReference type="Gene3D" id="3.30.70.380">
    <property type="entry name" value="Ferrodoxin-fold anticodon-binding domain"/>
    <property type="match status" value="1"/>
</dbReference>
<dbReference type="Gene3D" id="2.40.50.140">
    <property type="entry name" value="Nucleic acid-binding proteins"/>
    <property type="match status" value="1"/>
</dbReference>
<dbReference type="Gene3D" id="3.50.40.10">
    <property type="entry name" value="Phenylalanyl-trna Synthetase, Chain B, domain 3"/>
    <property type="match status" value="1"/>
</dbReference>
<dbReference type="HAMAP" id="MF_00283">
    <property type="entry name" value="Phe_tRNA_synth_beta1"/>
    <property type="match status" value="1"/>
</dbReference>
<dbReference type="InterPro" id="IPR045864">
    <property type="entry name" value="aa-tRNA-synth_II/BPL/LPL"/>
</dbReference>
<dbReference type="InterPro" id="IPR005146">
    <property type="entry name" value="B3/B4_tRNA-bd"/>
</dbReference>
<dbReference type="InterPro" id="IPR009061">
    <property type="entry name" value="DNA-bd_dom_put_sf"/>
</dbReference>
<dbReference type="InterPro" id="IPR005121">
    <property type="entry name" value="Fdx_antiC-bd"/>
</dbReference>
<dbReference type="InterPro" id="IPR036690">
    <property type="entry name" value="Fdx_antiC-bd_sf"/>
</dbReference>
<dbReference type="InterPro" id="IPR012340">
    <property type="entry name" value="NA-bd_OB-fold"/>
</dbReference>
<dbReference type="InterPro" id="IPR045060">
    <property type="entry name" value="Phe-tRNA-ligase_IIc_bsu"/>
</dbReference>
<dbReference type="InterPro" id="IPR004532">
    <property type="entry name" value="Phe-tRNA-ligase_IIc_bsu_bact"/>
</dbReference>
<dbReference type="InterPro" id="IPR020825">
    <property type="entry name" value="Phe-tRNA_synthase-like_B3/B4"/>
</dbReference>
<dbReference type="InterPro" id="IPR041616">
    <property type="entry name" value="PheRS_beta_core"/>
</dbReference>
<dbReference type="InterPro" id="IPR002547">
    <property type="entry name" value="tRNA-bd_dom"/>
</dbReference>
<dbReference type="InterPro" id="IPR033714">
    <property type="entry name" value="tRNA_bind_bactPheRS"/>
</dbReference>
<dbReference type="InterPro" id="IPR005147">
    <property type="entry name" value="tRNA_synthase_B5-dom"/>
</dbReference>
<dbReference type="NCBIfam" id="TIGR00472">
    <property type="entry name" value="pheT_bact"/>
    <property type="match status" value="1"/>
</dbReference>
<dbReference type="NCBIfam" id="NF045760">
    <property type="entry name" value="YtpR"/>
    <property type="match status" value="1"/>
</dbReference>
<dbReference type="PANTHER" id="PTHR10947:SF0">
    <property type="entry name" value="PHENYLALANINE--TRNA LIGASE BETA SUBUNIT"/>
    <property type="match status" value="1"/>
</dbReference>
<dbReference type="PANTHER" id="PTHR10947">
    <property type="entry name" value="PHENYLALANYL-TRNA SYNTHETASE BETA CHAIN AND LEUCINE-RICH REPEAT-CONTAINING PROTEIN 47"/>
    <property type="match status" value="1"/>
</dbReference>
<dbReference type="Pfam" id="PF03483">
    <property type="entry name" value="B3_4"/>
    <property type="match status" value="1"/>
</dbReference>
<dbReference type="Pfam" id="PF03484">
    <property type="entry name" value="B5"/>
    <property type="match status" value="1"/>
</dbReference>
<dbReference type="Pfam" id="PF03147">
    <property type="entry name" value="FDX-ACB"/>
    <property type="match status" value="1"/>
</dbReference>
<dbReference type="Pfam" id="PF01588">
    <property type="entry name" value="tRNA_bind"/>
    <property type="match status" value="1"/>
</dbReference>
<dbReference type="Pfam" id="PF17759">
    <property type="entry name" value="tRNA_synthFbeta"/>
    <property type="match status" value="1"/>
</dbReference>
<dbReference type="SMART" id="SM00873">
    <property type="entry name" value="B3_4"/>
    <property type="match status" value="1"/>
</dbReference>
<dbReference type="SMART" id="SM00874">
    <property type="entry name" value="B5"/>
    <property type="match status" value="1"/>
</dbReference>
<dbReference type="SMART" id="SM00896">
    <property type="entry name" value="FDX-ACB"/>
    <property type="match status" value="1"/>
</dbReference>
<dbReference type="SUPFAM" id="SSF54991">
    <property type="entry name" value="Anticodon-binding domain of PheRS"/>
    <property type="match status" value="1"/>
</dbReference>
<dbReference type="SUPFAM" id="SSF55681">
    <property type="entry name" value="Class II aaRS and biotin synthetases"/>
    <property type="match status" value="1"/>
</dbReference>
<dbReference type="SUPFAM" id="SSF50249">
    <property type="entry name" value="Nucleic acid-binding proteins"/>
    <property type="match status" value="1"/>
</dbReference>
<dbReference type="SUPFAM" id="SSF56037">
    <property type="entry name" value="PheT/TilS domain"/>
    <property type="match status" value="1"/>
</dbReference>
<dbReference type="SUPFAM" id="SSF46955">
    <property type="entry name" value="Putative DNA-binding domain"/>
    <property type="match status" value="1"/>
</dbReference>
<dbReference type="PROSITE" id="PS51483">
    <property type="entry name" value="B5"/>
    <property type="match status" value="1"/>
</dbReference>
<dbReference type="PROSITE" id="PS51447">
    <property type="entry name" value="FDX_ACB"/>
    <property type="match status" value="1"/>
</dbReference>
<dbReference type="PROSITE" id="PS50886">
    <property type="entry name" value="TRBD"/>
    <property type="match status" value="1"/>
</dbReference>
<gene>
    <name evidence="1" type="primary">pheT</name>
    <name type="ordered locus">SPs1347</name>
</gene>
<name>SYFB_STRPQ</name>
<accession>P0DG53</accession>
<accession>Q878H7</accession>
<accession>Q8K820</accession>
<proteinExistence type="inferred from homology"/>
<comment type="catalytic activity">
    <reaction evidence="1">
        <text>tRNA(Phe) + L-phenylalanine + ATP = L-phenylalanyl-tRNA(Phe) + AMP + diphosphate + H(+)</text>
        <dbReference type="Rhea" id="RHEA:19413"/>
        <dbReference type="Rhea" id="RHEA-COMP:9668"/>
        <dbReference type="Rhea" id="RHEA-COMP:9699"/>
        <dbReference type="ChEBI" id="CHEBI:15378"/>
        <dbReference type="ChEBI" id="CHEBI:30616"/>
        <dbReference type="ChEBI" id="CHEBI:33019"/>
        <dbReference type="ChEBI" id="CHEBI:58095"/>
        <dbReference type="ChEBI" id="CHEBI:78442"/>
        <dbReference type="ChEBI" id="CHEBI:78531"/>
        <dbReference type="ChEBI" id="CHEBI:456215"/>
        <dbReference type="EC" id="6.1.1.20"/>
    </reaction>
</comment>
<comment type="cofactor">
    <cofactor evidence="1">
        <name>Mg(2+)</name>
        <dbReference type="ChEBI" id="CHEBI:18420"/>
    </cofactor>
    <text evidence="1">Binds 2 magnesium ions per tetramer.</text>
</comment>
<comment type="subunit">
    <text evidence="1">Tetramer of two alpha and two beta subunits.</text>
</comment>
<comment type="subcellular location">
    <subcellularLocation>
        <location>Cytoplasm</location>
    </subcellularLocation>
</comment>
<comment type="similarity">
    <text evidence="1">Belongs to the phenylalanyl-tRNA synthetase beta subunit family. Type 1 subfamily.</text>
</comment>
<feature type="chain" id="PRO_0000411616" description="Phenylalanine--tRNA ligase beta subunit">
    <location>
        <begin position="1"/>
        <end position="801"/>
    </location>
</feature>
<feature type="domain" description="tRNA-binding" evidence="1">
    <location>
        <begin position="39"/>
        <end position="153"/>
    </location>
</feature>
<feature type="domain" description="B5" evidence="1">
    <location>
        <begin position="406"/>
        <end position="481"/>
    </location>
</feature>
<feature type="domain" description="FDX-ACB" evidence="1">
    <location>
        <begin position="708"/>
        <end position="801"/>
    </location>
</feature>
<feature type="binding site" evidence="1">
    <location>
        <position position="459"/>
    </location>
    <ligand>
        <name>Mg(2+)</name>
        <dbReference type="ChEBI" id="CHEBI:18420"/>
        <note>shared with alpha subunit</note>
    </ligand>
</feature>
<feature type="binding site" evidence="1">
    <location>
        <position position="465"/>
    </location>
    <ligand>
        <name>Mg(2+)</name>
        <dbReference type="ChEBI" id="CHEBI:18420"/>
        <note>shared with alpha subunit</note>
    </ligand>
</feature>
<feature type="binding site" evidence="1">
    <location>
        <position position="468"/>
    </location>
    <ligand>
        <name>Mg(2+)</name>
        <dbReference type="ChEBI" id="CHEBI:18420"/>
        <note>shared with alpha subunit</note>
    </ligand>
</feature>
<feature type="binding site" evidence="1">
    <location>
        <position position="469"/>
    </location>
    <ligand>
        <name>Mg(2+)</name>
        <dbReference type="ChEBI" id="CHEBI:18420"/>
        <note>shared with alpha subunit</note>
    </ligand>
</feature>
<sequence length="801" mass="87537">MLVSYKWLKELVDIDVTPAALAEKMSTTGIEVEGIEVPAEGLSKLVVGHVLSCEDVPETHLHLCQVDTGDETPRQIVCGAPNVKAGIKVIVAVPGARIADNYKIKKGKIRGMESLGMICSLQELGLSDSIIPKEFSDGIQILPDEAVPGDAIFKYLDLDDHIIELSITPNRADALSMRGVAHEVAAIYGKSVSFPEKNLQESDKATSEAIEVAIASDNVLTYASRVVENVKVKPSPQWLQNLLMNAGIRPINNVVDVTNYVLLYFGQPMHAFDYDKFEDHKIVTRAARQGESLVTLDGEKRELTTEDLVITVADKPVALAGVMGGQATEIDANSQTVVLEAAVFDGKSIRKTSGRLNLRSESSSRFEKGVNYATVLEALDFAAAMLQELAEGQVLSGHVQAGQLSTEPVEVSTNLDYVNVRLGTELTFADIQRIFNQLGFGLTGDETRFTVAVPRRRWDISIPADLVEEIARIYGYDKLPTTLPEAGGTAAELTPTQALRRKVRGLAEGLGLTEIISYALTTPEKAIEFAVAPSHLTELMWPMSVERSALRQNMVSGMLDTVAYNVARKQSNLALYEIGKIFEQEVNPKEDLPNEVNHFAFTICGLVAQKDFQTQAQAVDFYHAKGILDTLFANLNLKVQYVPTKDLANMHPGRTALILLDEQVIGFVGQVHPGTAKAYSIPETYVAELDMAALEAALPSDQTFAEITKFPAMTRDIALLLDREVSHQAIVTAIESAGVKRLTKIKLFDVYEGATIQAGKKSMAYSLTFQNPNDNLTDEEVAKYMEKITKALTEQVGAEVR</sequence>
<evidence type="ECO:0000255" key="1">
    <source>
        <dbReference type="HAMAP-Rule" id="MF_00283"/>
    </source>
</evidence>